<gene>
    <name evidence="1" type="primary">rpmA</name>
    <name type="ordered locus">RSal33209_3248</name>
</gene>
<organism>
    <name type="scientific">Renibacterium salmoninarum (strain ATCC 33209 / DSM 20767 / JCM 11484 / NBRC 15589 / NCIMB 2235)</name>
    <dbReference type="NCBI Taxonomy" id="288705"/>
    <lineage>
        <taxon>Bacteria</taxon>
        <taxon>Bacillati</taxon>
        <taxon>Actinomycetota</taxon>
        <taxon>Actinomycetes</taxon>
        <taxon>Micrococcales</taxon>
        <taxon>Micrococcaceae</taxon>
        <taxon>Renibacterium</taxon>
    </lineage>
</organism>
<proteinExistence type="inferred from homology"/>
<feature type="chain" id="PRO_1000081903" description="Large ribosomal subunit protein bL27">
    <location>
        <begin position="1"/>
        <end position="87"/>
    </location>
</feature>
<keyword id="KW-1185">Reference proteome</keyword>
<keyword id="KW-0687">Ribonucleoprotein</keyword>
<keyword id="KW-0689">Ribosomal protein</keyword>
<name>RL27_RENSM</name>
<protein>
    <recommendedName>
        <fullName evidence="1">Large ribosomal subunit protein bL27</fullName>
    </recommendedName>
    <alternativeName>
        <fullName evidence="2">50S ribosomal protein L27</fullName>
    </alternativeName>
</protein>
<dbReference type="EMBL" id="CP000910">
    <property type="protein sequence ID" value="ABY24964.1"/>
    <property type="molecule type" value="Genomic_DNA"/>
</dbReference>
<dbReference type="RefSeq" id="WP_012246604.1">
    <property type="nucleotide sequence ID" value="NC_010168.1"/>
</dbReference>
<dbReference type="SMR" id="A9WUU3"/>
<dbReference type="STRING" id="288705.RSal33209_3248"/>
<dbReference type="KEGG" id="rsa:RSal33209_3248"/>
<dbReference type="eggNOG" id="COG0211">
    <property type="taxonomic scope" value="Bacteria"/>
</dbReference>
<dbReference type="HOGENOM" id="CLU_095424_4_0_11"/>
<dbReference type="Proteomes" id="UP000002007">
    <property type="component" value="Chromosome"/>
</dbReference>
<dbReference type="GO" id="GO:0022625">
    <property type="term" value="C:cytosolic large ribosomal subunit"/>
    <property type="evidence" value="ECO:0007669"/>
    <property type="project" value="TreeGrafter"/>
</dbReference>
<dbReference type="GO" id="GO:0003735">
    <property type="term" value="F:structural constituent of ribosome"/>
    <property type="evidence" value="ECO:0007669"/>
    <property type="project" value="InterPro"/>
</dbReference>
<dbReference type="GO" id="GO:0006412">
    <property type="term" value="P:translation"/>
    <property type="evidence" value="ECO:0007669"/>
    <property type="project" value="UniProtKB-UniRule"/>
</dbReference>
<dbReference type="FunFam" id="2.40.50.100:FF:000020">
    <property type="entry name" value="50S ribosomal protein L27"/>
    <property type="match status" value="1"/>
</dbReference>
<dbReference type="Gene3D" id="2.40.50.100">
    <property type="match status" value="1"/>
</dbReference>
<dbReference type="HAMAP" id="MF_00539">
    <property type="entry name" value="Ribosomal_bL27"/>
    <property type="match status" value="1"/>
</dbReference>
<dbReference type="InterPro" id="IPR001684">
    <property type="entry name" value="Ribosomal_bL27"/>
</dbReference>
<dbReference type="InterPro" id="IPR018261">
    <property type="entry name" value="Ribosomal_bL27_CS"/>
</dbReference>
<dbReference type="NCBIfam" id="TIGR00062">
    <property type="entry name" value="L27"/>
    <property type="match status" value="1"/>
</dbReference>
<dbReference type="PANTHER" id="PTHR15893:SF0">
    <property type="entry name" value="LARGE RIBOSOMAL SUBUNIT PROTEIN BL27M"/>
    <property type="match status" value="1"/>
</dbReference>
<dbReference type="PANTHER" id="PTHR15893">
    <property type="entry name" value="RIBOSOMAL PROTEIN L27"/>
    <property type="match status" value="1"/>
</dbReference>
<dbReference type="Pfam" id="PF01016">
    <property type="entry name" value="Ribosomal_L27"/>
    <property type="match status" value="1"/>
</dbReference>
<dbReference type="PRINTS" id="PR00063">
    <property type="entry name" value="RIBOSOMALL27"/>
</dbReference>
<dbReference type="SUPFAM" id="SSF110324">
    <property type="entry name" value="Ribosomal L27 protein-like"/>
    <property type="match status" value="1"/>
</dbReference>
<dbReference type="PROSITE" id="PS00831">
    <property type="entry name" value="RIBOSOMAL_L27"/>
    <property type="match status" value="1"/>
</dbReference>
<reference key="1">
    <citation type="journal article" date="2008" name="J. Bacteriol.">
        <title>Genome sequence of the fish pathogen Renibacterium salmoninarum suggests reductive evolution away from an environmental Arthrobacter ancestor.</title>
        <authorList>
            <person name="Wiens G.D."/>
            <person name="Rockey D.D."/>
            <person name="Wu Z."/>
            <person name="Chang J."/>
            <person name="Levy R."/>
            <person name="Crane S."/>
            <person name="Chen D.S."/>
            <person name="Capri G.R."/>
            <person name="Burnett J.R."/>
            <person name="Sudheesh P.S."/>
            <person name="Schipma M.J."/>
            <person name="Burd H."/>
            <person name="Bhattacharyya A."/>
            <person name="Rhodes L.D."/>
            <person name="Kaul R."/>
            <person name="Strom M.S."/>
        </authorList>
    </citation>
    <scope>NUCLEOTIDE SEQUENCE [LARGE SCALE GENOMIC DNA]</scope>
    <source>
        <strain>ATCC 33209 / DSM 20767 / JCM 11484 / NBRC 15589 / NCIMB 2235</strain>
    </source>
</reference>
<evidence type="ECO:0000255" key="1">
    <source>
        <dbReference type="HAMAP-Rule" id="MF_00539"/>
    </source>
</evidence>
<evidence type="ECO:0000305" key="2"/>
<comment type="similarity">
    <text evidence="1">Belongs to the bacterial ribosomal protein bL27 family.</text>
</comment>
<sequence length="87" mass="9059">MAHKKGASSTRNGRDSNAQYLGVKRFGGQVVKAGEIIVRQRGTHFHPGAGVGRGKDDTLFALEAGAVEFGARGGRRVVNIVVAAAAE</sequence>
<accession>A9WUU3</accession>